<keyword id="KW-1185">Reference proteome</keyword>
<keyword id="KW-0687">Ribonucleoprotein</keyword>
<keyword id="KW-0689">Ribosomal protein</keyword>
<reference key="1">
    <citation type="journal article" date="2002" name="Proc. Natl. Acad. Sci. U.S.A.">
        <title>The complete genome sequence of Chlorobium tepidum TLS, a photosynthetic, anaerobic, green-sulfur bacterium.</title>
        <authorList>
            <person name="Eisen J.A."/>
            <person name="Nelson K.E."/>
            <person name="Paulsen I.T."/>
            <person name="Heidelberg J.F."/>
            <person name="Wu M."/>
            <person name="Dodson R.J."/>
            <person name="DeBoy R.T."/>
            <person name="Gwinn M.L."/>
            <person name="Nelson W.C."/>
            <person name="Haft D.H."/>
            <person name="Hickey E.K."/>
            <person name="Peterson J.D."/>
            <person name="Durkin A.S."/>
            <person name="Kolonay J.F."/>
            <person name="Yang F."/>
            <person name="Holt I.E."/>
            <person name="Umayam L.A."/>
            <person name="Mason T.M."/>
            <person name="Brenner M."/>
            <person name="Shea T.P."/>
            <person name="Parksey D.S."/>
            <person name="Nierman W.C."/>
            <person name="Feldblyum T.V."/>
            <person name="Hansen C.L."/>
            <person name="Craven M.B."/>
            <person name="Radune D."/>
            <person name="Vamathevan J.J."/>
            <person name="Khouri H.M."/>
            <person name="White O."/>
            <person name="Gruber T.M."/>
            <person name="Ketchum K.A."/>
            <person name="Venter J.C."/>
            <person name="Tettelin H."/>
            <person name="Bryant D.A."/>
            <person name="Fraser C.M."/>
        </authorList>
    </citation>
    <scope>NUCLEOTIDE SEQUENCE [LARGE SCALE GENOMIC DNA]</scope>
    <source>
        <strain>ATCC 49652 / DSM 12025 / NBRC 103806 / TLS</strain>
    </source>
</reference>
<dbReference type="EMBL" id="AE006470">
    <property type="protein sequence ID" value="AAM72399.1"/>
    <property type="molecule type" value="Genomic_DNA"/>
</dbReference>
<dbReference type="RefSeq" id="NP_662057.1">
    <property type="nucleotide sequence ID" value="NC_002932.3"/>
</dbReference>
<dbReference type="RefSeq" id="WP_010932838.1">
    <property type="nucleotide sequence ID" value="NC_002932.3"/>
</dbReference>
<dbReference type="SMR" id="Q8KD88"/>
<dbReference type="STRING" id="194439.CT1166"/>
<dbReference type="EnsemblBacteria" id="AAM72399">
    <property type="protein sequence ID" value="AAM72399"/>
    <property type="gene ID" value="CT1166"/>
</dbReference>
<dbReference type="KEGG" id="cte:CT1166"/>
<dbReference type="PATRIC" id="fig|194439.7.peg.1061"/>
<dbReference type="eggNOG" id="COG0228">
    <property type="taxonomic scope" value="Bacteria"/>
</dbReference>
<dbReference type="HOGENOM" id="CLU_100590_3_2_10"/>
<dbReference type="OrthoDB" id="9807878at2"/>
<dbReference type="Proteomes" id="UP000001007">
    <property type="component" value="Chromosome"/>
</dbReference>
<dbReference type="GO" id="GO:0005737">
    <property type="term" value="C:cytoplasm"/>
    <property type="evidence" value="ECO:0007669"/>
    <property type="project" value="UniProtKB-ARBA"/>
</dbReference>
<dbReference type="GO" id="GO:0015935">
    <property type="term" value="C:small ribosomal subunit"/>
    <property type="evidence" value="ECO:0007669"/>
    <property type="project" value="TreeGrafter"/>
</dbReference>
<dbReference type="GO" id="GO:0003735">
    <property type="term" value="F:structural constituent of ribosome"/>
    <property type="evidence" value="ECO:0007669"/>
    <property type="project" value="InterPro"/>
</dbReference>
<dbReference type="GO" id="GO:0006412">
    <property type="term" value="P:translation"/>
    <property type="evidence" value="ECO:0007669"/>
    <property type="project" value="UniProtKB-UniRule"/>
</dbReference>
<dbReference type="Gene3D" id="3.30.1320.10">
    <property type="match status" value="1"/>
</dbReference>
<dbReference type="HAMAP" id="MF_00385">
    <property type="entry name" value="Ribosomal_bS16"/>
    <property type="match status" value="1"/>
</dbReference>
<dbReference type="InterPro" id="IPR000307">
    <property type="entry name" value="Ribosomal_bS16"/>
</dbReference>
<dbReference type="InterPro" id="IPR020592">
    <property type="entry name" value="Ribosomal_bS16_CS"/>
</dbReference>
<dbReference type="InterPro" id="IPR023803">
    <property type="entry name" value="Ribosomal_bS16_dom_sf"/>
</dbReference>
<dbReference type="NCBIfam" id="TIGR00002">
    <property type="entry name" value="S16"/>
    <property type="match status" value="1"/>
</dbReference>
<dbReference type="PANTHER" id="PTHR12919">
    <property type="entry name" value="30S RIBOSOMAL PROTEIN S16"/>
    <property type="match status" value="1"/>
</dbReference>
<dbReference type="PANTHER" id="PTHR12919:SF20">
    <property type="entry name" value="SMALL RIBOSOMAL SUBUNIT PROTEIN BS16M"/>
    <property type="match status" value="1"/>
</dbReference>
<dbReference type="Pfam" id="PF00886">
    <property type="entry name" value="Ribosomal_S16"/>
    <property type="match status" value="1"/>
</dbReference>
<dbReference type="SUPFAM" id="SSF54565">
    <property type="entry name" value="Ribosomal protein S16"/>
    <property type="match status" value="1"/>
</dbReference>
<dbReference type="PROSITE" id="PS00732">
    <property type="entry name" value="RIBOSOMAL_S16"/>
    <property type="match status" value="1"/>
</dbReference>
<sequence length="134" mass="15171">MVKIRLKRAGRKKMPFYQIVAADGRAPRDGKFLEVLGHYNPTAKPHTVTIEKDRVAYWLNVGAQPTDTVHSLIRGTGLLHEMNLKRRGLSESDIAAQMEAWRQKEAERRQKRLNAKLRRRQAKKAAEAAGSAEG</sequence>
<evidence type="ECO:0000255" key="1">
    <source>
        <dbReference type="HAMAP-Rule" id="MF_00385"/>
    </source>
</evidence>
<evidence type="ECO:0000256" key="2">
    <source>
        <dbReference type="SAM" id="MobiDB-lite"/>
    </source>
</evidence>
<evidence type="ECO:0000305" key="3"/>
<comment type="similarity">
    <text evidence="1">Belongs to the bacterial ribosomal protein bS16 family.</text>
</comment>
<proteinExistence type="inferred from homology"/>
<feature type="chain" id="PRO_0000167173" description="Small ribosomal subunit protein bS16">
    <location>
        <begin position="1"/>
        <end position="134"/>
    </location>
</feature>
<feature type="region of interest" description="Disordered" evidence="2">
    <location>
        <begin position="115"/>
        <end position="134"/>
    </location>
</feature>
<accession>Q8KD88</accession>
<gene>
    <name evidence="1" type="primary">rpsP</name>
    <name type="ordered locus">CT1166</name>
</gene>
<name>RS16_CHLTE</name>
<organism>
    <name type="scientific">Chlorobaculum tepidum (strain ATCC 49652 / DSM 12025 / NBRC 103806 / TLS)</name>
    <name type="common">Chlorobium tepidum</name>
    <dbReference type="NCBI Taxonomy" id="194439"/>
    <lineage>
        <taxon>Bacteria</taxon>
        <taxon>Pseudomonadati</taxon>
        <taxon>Chlorobiota</taxon>
        <taxon>Chlorobiia</taxon>
        <taxon>Chlorobiales</taxon>
        <taxon>Chlorobiaceae</taxon>
        <taxon>Chlorobaculum</taxon>
    </lineage>
</organism>
<protein>
    <recommendedName>
        <fullName evidence="1">Small ribosomal subunit protein bS16</fullName>
    </recommendedName>
    <alternativeName>
        <fullName evidence="3">30S ribosomal protein S16</fullName>
    </alternativeName>
</protein>